<sequence>MAKKSMIQRELKREKLVAKYAQKRAEFKAIILDINSTEEQIWEAQIKLQKLPVNSSASRVQRRCKVTGRPHAVYRKFGLCRNKLREYAMAGDVPGLKKASW</sequence>
<organism>
    <name type="scientific">Francisella tularensis subsp. tularensis (strain SCHU S4 / Schu 4)</name>
    <dbReference type="NCBI Taxonomy" id="177416"/>
    <lineage>
        <taxon>Bacteria</taxon>
        <taxon>Pseudomonadati</taxon>
        <taxon>Pseudomonadota</taxon>
        <taxon>Gammaproteobacteria</taxon>
        <taxon>Thiotrichales</taxon>
        <taxon>Francisellaceae</taxon>
        <taxon>Francisella</taxon>
    </lineage>
</organism>
<accession>Q5NHV5</accession>
<keyword id="KW-1185">Reference proteome</keyword>
<keyword id="KW-0687">Ribonucleoprotein</keyword>
<keyword id="KW-0689">Ribosomal protein</keyword>
<keyword id="KW-0694">RNA-binding</keyword>
<keyword id="KW-0699">rRNA-binding</keyword>
<dbReference type="EMBL" id="AJ749949">
    <property type="protein sequence ID" value="CAG44971.1"/>
    <property type="molecule type" value="Genomic_DNA"/>
</dbReference>
<dbReference type="RefSeq" id="WP_003014354.1">
    <property type="nucleotide sequence ID" value="NZ_CP010290.1"/>
</dbReference>
<dbReference type="RefSeq" id="YP_169387.1">
    <property type="nucleotide sequence ID" value="NC_006570.2"/>
</dbReference>
<dbReference type="SMR" id="Q5NHV5"/>
<dbReference type="STRING" id="177416.FTT_0338"/>
<dbReference type="DNASU" id="3192379"/>
<dbReference type="EnsemblBacteria" id="CAG44971">
    <property type="protein sequence ID" value="CAG44971"/>
    <property type="gene ID" value="FTT_0338"/>
</dbReference>
<dbReference type="KEGG" id="ftu:FTT_0338"/>
<dbReference type="eggNOG" id="COG0199">
    <property type="taxonomic scope" value="Bacteria"/>
</dbReference>
<dbReference type="OrthoDB" id="9810484at2"/>
<dbReference type="Proteomes" id="UP000001174">
    <property type="component" value="Chromosome"/>
</dbReference>
<dbReference type="GO" id="GO:0005737">
    <property type="term" value="C:cytoplasm"/>
    <property type="evidence" value="ECO:0007669"/>
    <property type="project" value="UniProtKB-ARBA"/>
</dbReference>
<dbReference type="GO" id="GO:0015935">
    <property type="term" value="C:small ribosomal subunit"/>
    <property type="evidence" value="ECO:0007669"/>
    <property type="project" value="TreeGrafter"/>
</dbReference>
<dbReference type="GO" id="GO:0019843">
    <property type="term" value="F:rRNA binding"/>
    <property type="evidence" value="ECO:0007669"/>
    <property type="project" value="UniProtKB-UniRule"/>
</dbReference>
<dbReference type="GO" id="GO:0003735">
    <property type="term" value="F:structural constituent of ribosome"/>
    <property type="evidence" value="ECO:0007669"/>
    <property type="project" value="InterPro"/>
</dbReference>
<dbReference type="GO" id="GO:0006412">
    <property type="term" value="P:translation"/>
    <property type="evidence" value="ECO:0007669"/>
    <property type="project" value="UniProtKB-UniRule"/>
</dbReference>
<dbReference type="FunFam" id="1.10.287.1480:FF:000001">
    <property type="entry name" value="30S ribosomal protein S14"/>
    <property type="match status" value="1"/>
</dbReference>
<dbReference type="Gene3D" id="1.10.287.1480">
    <property type="match status" value="1"/>
</dbReference>
<dbReference type="HAMAP" id="MF_00537">
    <property type="entry name" value="Ribosomal_uS14_1"/>
    <property type="match status" value="1"/>
</dbReference>
<dbReference type="InterPro" id="IPR001209">
    <property type="entry name" value="Ribosomal_uS14"/>
</dbReference>
<dbReference type="InterPro" id="IPR023036">
    <property type="entry name" value="Ribosomal_uS14_bac/plastid"/>
</dbReference>
<dbReference type="InterPro" id="IPR018271">
    <property type="entry name" value="Ribosomal_uS14_CS"/>
</dbReference>
<dbReference type="NCBIfam" id="NF006477">
    <property type="entry name" value="PRK08881.1"/>
    <property type="match status" value="1"/>
</dbReference>
<dbReference type="PANTHER" id="PTHR19836">
    <property type="entry name" value="30S RIBOSOMAL PROTEIN S14"/>
    <property type="match status" value="1"/>
</dbReference>
<dbReference type="PANTHER" id="PTHR19836:SF19">
    <property type="entry name" value="SMALL RIBOSOMAL SUBUNIT PROTEIN US14M"/>
    <property type="match status" value="1"/>
</dbReference>
<dbReference type="Pfam" id="PF00253">
    <property type="entry name" value="Ribosomal_S14"/>
    <property type="match status" value="1"/>
</dbReference>
<dbReference type="SUPFAM" id="SSF57716">
    <property type="entry name" value="Glucocorticoid receptor-like (DNA-binding domain)"/>
    <property type="match status" value="1"/>
</dbReference>
<dbReference type="PROSITE" id="PS00527">
    <property type="entry name" value="RIBOSOMAL_S14"/>
    <property type="match status" value="1"/>
</dbReference>
<evidence type="ECO:0000255" key="1">
    <source>
        <dbReference type="HAMAP-Rule" id="MF_00537"/>
    </source>
</evidence>
<evidence type="ECO:0000305" key="2"/>
<comment type="function">
    <text evidence="1">Binds 16S rRNA, required for the assembly of 30S particles and may also be responsible for determining the conformation of the 16S rRNA at the A site.</text>
</comment>
<comment type="subunit">
    <text evidence="1">Part of the 30S ribosomal subunit. Contacts proteins S3 and S10.</text>
</comment>
<comment type="similarity">
    <text evidence="1">Belongs to the universal ribosomal protein uS14 family.</text>
</comment>
<protein>
    <recommendedName>
        <fullName evidence="1">Small ribosomal subunit protein uS14</fullName>
    </recommendedName>
    <alternativeName>
        <fullName evidence="2">30S ribosomal protein S14</fullName>
    </alternativeName>
</protein>
<name>RS14_FRATT</name>
<feature type="chain" id="PRO_0000269049" description="Small ribosomal subunit protein uS14">
    <location>
        <begin position="1"/>
        <end position="101"/>
    </location>
</feature>
<reference key="1">
    <citation type="journal article" date="2005" name="Nat. Genet.">
        <title>The complete genome sequence of Francisella tularensis, the causative agent of tularemia.</title>
        <authorList>
            <person name="Larsson P."/>
            <person name="Oyston P.C.F."/>
            <person name="Chain P."/>
            <person name="Chu M.C."/>
            <person name="Duffield M."/>
            <person name="Fuxelius H.-H."/>
            <person name="Garcia E."/>
            <person name="Haelltorp G."/>
            <person name="Johansson D."/>
            <person name="Isherwood K.E."/>
            <person name="Karp P.D."/>
            <person name="Larsson E."/>
            <person name="Liu Y."/>
            <person name="Michell S."/>
            <person name="Prior J."/>
            <person name="Prior R."/>
            <person name="Malfatti S."/>
            <person name="Sjoestedt A."/>
            <person name="Svensson K."/>
            <person name="Thompson N."/>
            <person name="Vergez L."/>
            <person name="Wagg J.K."/>
            <person name="Wren B.W."/>
            <person name="Lindler L.E."/>
            <person name="Andersson S.G.E."/>
            <person name="Forsman M."/>
            <person name="Titball R.W."/>
        </authorList>
    </citation>
    <scope>NUCLEOTIDE SEQUENCE [LARGE SCALE GENOMIC DNA]</scope>
    <source>
        <strain>SCHU S4 / Schu 4</strain>
    </source>
</reference>
<gene>
    <name evidence="1" type="primary">rpsN</name>
    <name type="ordered locus">FTT_0338</name>
</gene>
<proteinExistence type="inferred from homology"/>